<feature type="chain" id="PRO_0000410354" description="High osmolarity signaling protein SHO1">
    <location>
        <begin position="1"/>
        <end position="322"/>
    </location>
</feature>
<feature type="topological domain" description="Cytoplasmic" evidence="2">
    <location>
        <begin position="1"/>
        <end position="40"/>
    </location>
</feature>
<feature type="transmembrane region" description="Helical" evidence="2">
    <location>
        <begin position="41"/>
        <end position="61"/>
    </location>
</feature>
<feature type="topological domain" description="Extracellular" evidence="2">
    <location>
        <begin position="62"/>
        <end position="70"/>
    </location>
</feature>
<feature type="transmembrane region" description="Helical" evidence="2">
    <location>
        <begin position="71"/>
        <end position="91"/>
    </location>
</feature>
<feature type="topological domain" description="Cytoplasmic" evidence="2">
    <location>
        <begin position="92"/>
        <end position="96"/>
    </location>
</feature>
<feature type="transmembrane region" description="Helical" evidence="2">
    <location>
        <begin position="97"/>
        <end position="117"/>
    </location>
</feature>
<feature type="topological domain" description="Extracellular" evidence="2">
    <location>
        <begin position="118"/>
        <end position="129"/>
    </location>
</feature>
<feature type="transmembrane region" description="Helical" evidence="2">
    <location>
        <begin position="130"/>
        <end position="150"/>
    </location>
</feature>
<feature type="topological domain" description="Cytoplasmic" evidence="2">
    <location>
        <begin position="151"/>
        <end position="322"/>
    </location>
</feature>
<feature type="domain" description="SH3" evidence="3">
    <location>
        <begin position="263"/>
        <end position="322"/>
    </location>
</feature>
<feature type="region of interest" description="Disordered" evidence="4">
    <location>
        <begin position="159"/>
        <end position="184"/>
    </location>
</feature>
<comment type="function">
    <text evidence="1">Plasma membrane osmosensor that activates the high osmolarity glycerol (HOG) MAPK signaling pathway in response to high osmolarity.</text>
</comment>
<comment type="subunit">
    <text evidence="1">Forms homooligomers.</text>
</comment>
<comment type="subcellular location">
    <subcellularLocation>
        <location evidence="1">Cell membrane</location>
        <topology evidence="1">Multi-pass membrane protein</topology>
    </subcellularLocation>
</comment>
<comment type="similarity">
    <text evidence="5">Belongs to the SHO1 family.</text>
</comment>
<sequence>MVTYSANYSPSFQRRSPVAVHNRRSNMARMDLNNIVGDPFALITISTSMIAWLLSFVTCVISDIQGLFPNFAWWAVGYMLCAIIGISIVLGSQTSHVYGVAIVGYLAAGLAFTSLAVNSLIYDDEASKQAAAAGFILQSMVIIVWIFYFGSSRHSSSRGYHDSMGAGKEQHHSYRNSKPISNNYGARPETTVSANQPPQMYTSAQLNGFETSSPVSGFPPTATNGADIQNRFGTTLGSQTNLGGGSTIGQDHQSTNEVSQPTEYPYRAKAIYSYEANPDDANEISFAKHEILDVSDVSGRWWQAKKASGETGIAPSNYLILI</sequence>
<dbReference type="EMBL" id="GG657449">
    <property type="protein sequence ID" value="OAT04377.1"/>
    <property type="molecule type" value="Genomic_DNA"/>
</dbReference>
<dbReference type="SMR" id="C5JGE5"/>
<dbReference type="STRING" id="559298.C5JGE5"/>
<dbReference type="VEuPathDB" id="FungiDB:BDBG_00947"/>
<dbReference type="HOGENOM" id="CLU_043316_1_0_1"/>
<dbReference type="OrthoDB" id="5983572at2759"/>
<dbReference type="Proteomes" id="UP000002038">
    <property type="component" value="Unassembled WGS sequence"/>
</dbReference>
<dbReference type="GO" id="GO:0005886">
    <property type="term" value="C:plasma membrane"/>
    <property type="evidence" value="ECO:0007669"/>
    <property type="project" value="UniProtKB-SubCell"/>
</dbReference>
<dbReference type="CDD" id="cd11855">
    <property type="entry name" value="SH3_Sho1p"/>
    <property type="match status" value="1"/>
</dbReference>
<dbReference type="FunFam" id="2.30.30.40:FF:000213">
    <property type="entry name" value="High osmolarity signaling protein SHO1"/>
    <property type="match status" value="1"/>
</dbReference>
<dbReference type="Gene3D" id="2.30.30.40">
    <property type="entry name" value="SH3 Domains"/>
    <property type="match status" value="1"/>
</dbReference>
<dbReference type="InterPro" id="IPR036028">
    <property type="entry name" value="SH3-like_dom_sf"/>
</dbReference>
<dbReference type="InterPro" id="IPR001452">
    <property type="entry name" value="SH3_domain"/>
</dbReference>
<dbReference type="InterPro" id="IPR035522">
    <property type="entry name" value="Sho1_SH3"/>
</dbReference>
<dbReference type="Pfam" id="PF00018">
    <property type="entry name" value="SH3_1"/>
    <property type="match status" value="1"/>
</dbReference>
<dbReference type="SMART" id="SM00326">
    <property type="entry name" value="SH3"/>
    <property type="match status" value="1"/>
</dbReference>
<dbReference type="SUPFAM" id="SSF50044">
    <property type="entry name" value="SH3-domain"/>
    <property type="match status" value="1"/>
</dbReference>
<dbReference type="PROSITE" id="PS50002">
    <property type="entry name" value="SH3"/>
    <property type="match status" value="1"/>
</dbReference>
<gene>
    <name type="primary">SHO1</name>
    <name type="ORF">BDBG_00947</name>
</gene>
<evidence type="ECO:0000250" key="1"/>
<evidence type="ECO:0000255" key="2"/>
<evidence type="ECO:0000255" key="3">
    <source>
        <dbReference type="PROSITE-ProRule" id="PRU00192"/>
    </source>
</evidence>
<evidence type="ECO:0000256" key="4">
    <source>
        <dbReference type="SAM" id="MobiDB-lite"/>
    </source>
</evidence>
<evidence type="ECO:0000305" key="5"/>
<accession>C5JGE5</accession>
<accession>A0A179UB44</accession>
<proteinExistence type="inferred from homology"/>
<organism>
    <name type="scientific">Blastomyces gilchristii (strain SLH14081)</name>
    <name type="common">Blastomyces dermatitidis</name>
    <dbReference type="NCBI Taxonomy" id="559298"/>
    <lineage>
        <taxon>Eukaryota</taxon>
        <taxon>Fungi</taxon>
        <taxon>Dikarya</taxon>
        <taxon>Ascomycota</taxon>
        <taxon>Pezizomycotina</taxon>
        <taxon>Eurotiomycetes</taxon>
        <taxon>Eurotiomycetidae</taxon>
        <taxon>Onygenales</taxon>
        <taxon>Ajellomycetaceae</taxon>
        <taxon>Blastomyces</taxon>
    </lineage>
</organism>
<protein>
    <recommendedName>
        <fullName>High osmolarity signaling protein SHO1</fullName>
    </recommendedName>
    <alternativeName>
        <fullName>Osmosensor SHO1</fullName>
    </alternativeName>
</protein>
<reference key="1">
    <citation type="journal article" date="2015" name="PLoS Genet.">
        <title>The dynamic genome and transcriptome of the human fungal pathogen Blastomyces and close relative Emmonsia.</title>
        <authorList>
            <person name="Munoz J.F."/>
            <person name="Gauthier G.M."/>
            <person name="Desjardins C.A."/>
            <person name="Gallo J.E."/>
            <person name="Holder J."/>
            <person name="Sullivan T.D."/>
            <person name="Marty A.J."/>
            <person name="Carmen J.C."/>
            <person name="Chen Z."/>
            <person name="Ding L."/>
            <person name="Gujja S."/>
            <person name="Magrini V."/>
            <person name="Misas E."/>
            <person name="Mitreva M."/>
            <person name="Priest M."/>
            <person name="Saif S."/>
            <person name="Whiston E.A."/>
            <person name="Young S."/>
            <person name="Zeng Q."/>
            <person name="Goldman W.E."/>
            <person name="Mardis E.R."/>
            <person name="Taylor J.W."/>
            <person name="McEwen J.G."/>
            <person name="Clay O.K."/>
            <person name="Klein B.S."/>
            <person name="Cuomo C.A."/>
        </authorList>
    </citation>
    <scope>NUCLEOTIDE SEQUENCE [LARGE SCALE GENOMIC DNA]</scope>
    <source>
        <strain>SLH14081</strain>
    </source>
</reference>
<keyword id="KW-1003">Cell membrane</keyword>
<keyword id="KW-0472">Membrane</keyword>
<keyword id="KW-1185">Reference proteome</keyword>
<keyword id="KW-0728">SH3 domain</keyword>
<keyword id="KW-0346">Stress response</keyword>
<keyword id="KW-0812">Transmembrane</keyword>
<keyword id="KW-1133">Transmembrane helix</keyword>
<name>SHO1_BLAGS</name>